<dbReference type="EC" id="3.4.21.-"/>
<dbReference type="EC" id="3.4.22.45"/>
<dbReference type="EMBL" id="X12456">
    <property type="status" value="NOT_ANNOTATED_CDS"/>
    <property type="molecule type" value="Genomic_RNA"/>
</dbReference>
<dbReference type="EMBL" id="D00441">
    <property type="status" value="NOT_ANNOTATED_CDS"/>
    <property type="molecule type" value="Genomic_RNA"/>
</dbReference>
<dbReference type="SMR" id="P0CJ93"/>
<dbReference type="Proteomes" id="UP000000520">
    <property type="component" value="Segment"/>
</dbReference>
<dbReference type="GO" id="GO:0044219">
    <property type="term" value="C:host cell plasmodesma"/>
    <property type="evidence" value="ECO:0007669"/>
    <property type="project" value="UniProtKB-SubCell"/>
</dbReference>
<dbReference type="GO" id="GO:0004197">
    <property type="term" value="F:cysteine-type endopeptidase activity"/>
    <property type="evidence" value="ECO:0007669"/>
    <property type="project" value="InterPro"/>
</dbReference>
<dbReference type="GO" id="GO:0008236">
    <property type="term" value="F:serine-type peptidase activity"/>
    <property type="evidence" value="ECO:0007669"/>
    <property type="project" value="UniProtKB-KW"/>
</dbReference>
<dbReference type="GO" id="GO:0006508">
    <property type="term" value="P:proteolysis"/>
    <property type="evidence" value="ECO:0007669"/>
    <property type="project" value="UniProtKB-KW"/>
</dbReference>
<dbReference type="GO" id="GO:0052170">
    <property type="term" value="P:symbiont-mediated suppression of host innate immune response"/>
    <property type="evidence" value="ECO:0007669"/>
    <property type="project" value="UniProtKB-KW"/>
</dbReference>
<dbReference type="GO" id="GO:0046740">
    <property type="term" value="P:transport of virus in host, cell to cell"/>
    <property type="evidence" value="ECO:0007669"/>
    <property type="project" value="UniProtKB-KW"/>
</dbReference>
<dbReference type="GO" id="GO:0075523">
    <property type="term" value="P:viral translational frameshifting"/>
    <property type="evidence" value="ECO:0007669"/>
    <property type="project" value="UniProtKB-KW"/>
</dbReference>
<dbReference type="Gene3D" id="3.90.70.150">
    <property type="entry name" value="Helper component proteinase"/>
    <property type="match status" value="1"/>
</dbReference>
<dbReference type="InterPro" id="IPR001456">
    <property type="entry name" value="HC-pro"/>
</dbReference>
<dbReference type="InterPro" id="IPR031159">
    <property type="entry name" value="HC_PRO_CPD_dom"/>
</dbReference>
<dbReference type="InterPro" id="IPR042308">
    <property type="entry name" value="HC_PRO_CPD_sf"/>
</dbReference>
<dbReference type="InterPro" id="IPR002540">
    <property type="entry name" value="Pept_S30_P1_potyvir"/>
</dbReference>
<dbReference type="InterPro" id="IPR039560">
    <property type="entry name" value="Potyvirid-P3"/>
</dbReference>
<dbReference type="Pfam" id="PF00851">
    <property type="entry name" value="Peptidase_C6"/>
    <property type="match status" value="1"/>
</dbReference>
<dbReference type="Pfam" id="PF01577">
    <property type="entry name" value="Peptidase_S30"/>
    <property type="match status" value="1"/>
</dbReference>
<dbReference type="Pfam" id="PF13608">
    <property type="entry name" value="Potyvirid-P3"/>
    <property type="match status" value="1"/>
</dbReference>
<dbReference type="PROSITE" id="PS51744">
    <property type="entry name" value="HC_PRO_CPD"/>
    <property type="match status" value="1"/>
</dbReference>
<dbReference type="PROSITE" id="PS51871">
    <property type="entry name" value="PV_P1_PRO"/>
    <property type="match status" value="1"/>
</dbReference>
<sequence length="986" mass="111724">MATYMSTICFGSFECKLPYSPASCEHIVKEREVPASVDPFADLETQLSARLLKQKYATVRVLKNGTFTYRYKTDAQIMRIQKKLERKDREEYHFQMAAPSIVSKITIAGGDPPSKSEPQAPRGIIHTTPRMRKVKTRPIIKLTEGQMNHLIKQIKQIMSEKRGSVHLISKKTTHVQYKKILGAYSAAVRTAHMMGLRRRVDFRCDMWTVGLLQRLARTDKWSNQVRTINIRRGDSGVILNTKSLKGHFGRSSGGLFIVRGSHEGKLYDARSRVTQSILNSMIQFSNADNFWKGLDGNWARMRYPSDHTCVAGLPVEDCGRVAALMAHSILPCYKITCPTCAQQYASLPVSDLFKLLHKHARDGLNRLGADKDRFIHVNKFLIALEHLTEPVDLNLELFNEIFKSIGEKQQAPFKNLNVLNNFFLKGKENTAHEWQVAQLSLLELARFQKNRTDNIKKGDISFFRNKLSAKANWNLYLSCDNQLDKNANFLWGQREYHAKRFFSNFFEEIDPAKGYSAYEIRKHPSGTRKLSIGNLVVPLDLAEFRQKMKGDYRKQPGVSKKCTSSKDGNYVYPCCCTTLDDGSAIESTFYPPTKKHLVIGNSGDQKFVDLPKGDSEMLYIAKQGYCYINVFLAMLINISEEDAKDFTKKVRDMCVPKLGTWPTMMDLATTCAQMRIFYPDVHDAELPRILVDHDTQTCHVVDSFGSQTTGYHILKASSVSQLILFANDELESDIKHYRVGGVPNASPELGSTISPFREGGVIMSESAALKLLLKGIFRPKVMRQLLLDEPYLLILSILSPGILMAMYNNGIFELAVRLWINEKQSIAMIASLLSALALRVSAAETLVAQRIIIDAAATDLLDATCDGFNLHLTYPTALMVLQVVKNRNECDDTLFKAGFPSYNTSVVQIMEKKLSKSLERCLERFNLARKLSATWYSYRAKRSIHSVHKTHRKGRFERVIQHITTSVLGPKRPGGQRHCLRIERAI</sequence>
<protein>
    <recommendedName>
        <fullName>P3N-PIPO polyprotein</fullName>
    </recommendedName>
    <component>
        <recommendedName>
            <fullName>P1 protease</fullName>
            <ecNumber>3.4.21.-</ecNumber>
        </recommendedName>
        <alternativeName>
            <fullName>N-terminal protein</fullName>
        </alternativeName>
        <alternativeName>
            <fullName>P1 proteinase</fullName>
        </alternativeName>
    </component>
    <component>
        <recommendedName>
            <fullName>Helper component proteinase</fullName>
            <shortName>HC-pro</shortName>
            <ecNumber>3.4.22.45</ecNumber>
        </recommendedName>
    </component>
    <component>
        <recommendedName>
            <fullName>Movement protein P3N-PIPO</fullName>
        </recommendedName>
        <alternativeName>
            <fullName>Pretty interesting potyviridae ORF</fullName>
            <shortName>PIPO</shortName>
        </alternativeName>
    </component>
</protein>
<reference key="1">
    <citation type="journal article" date="1989" name="J. Gen. Virol.">
        <title>Nucleotide sequence of potato virus Y (N Strain) genomic RNA.</title>
        <authorList>
            <person name="Robaglia C."/>
            <person name="Durand-Tardif M."/>
            <person name="Tronchet M."/>
            <person name="Boudazin G."/>
            <person name="Astier-Manifacier S."/>
            <person name="Casse-Delbart F."/>
        </authorList>
    </citation>
    <scope>NUCLEOTIDE SEQUENCE [GENOMIC RNA]</scope>
</reference>
<reference key="2">
    <citation type="submission" date="1994-01" db="EMBL/GenBank/DDBJ databases">
        <authorList>
            <person name="Durand-Tardif M."/>
        </authorList>
    </citation>
    <scope>SEQUENCE REVISION</scope>
</reference>
<reference key="3">
    <citation type="journal article" date="2021" name="PLoS ONE">
        <title>Analysis of proteolytic processing sites in potyvirus polyproteins revealed differential amino acid preferences of NIa-Pro protease in each of seven cleavage sites.</title>
        <authorList>
            <person name="Goh C.J."/>
            <person name="Hahn Y."/>
        </authorList>
    </citation>
    <scope>PROTEOLYTIC CLEAVAGE (P3N-PIPO POLYPROTEIN)</scope>
</reference>
<organism>
    <name type="scientific">Potato virus Y (strain N)</name>
    <name type="common">PVY</name>
    <dbReference type="NCBI Taxonomy" id="12219"/>
    <lineage>
        <taxon>Viruses</taxon>
        <taxon>Riboviria</taxon>
        <taxon>Orthornavirae</taxon>
        <taxon>Pisuviricota</taxon>
        <taxon>Stelpaviricetes</taxon>
        <taxon>Patatavirales</taxon>
        <taxon>Potyviridae</taxon>
        <taxon>Potyvirus</taxon>
        <taxon>Potyvirus yituberosi</taxon>
        <taxon>Potato virus Y</taxon>
    </lineage>
</organism>
<keyword id="KW-1031">Host cell junction</keyword>
<keyword id="KW-0945">Host-virus interaction</keyword>
<keyword id="KW-0378">Hydrolase</keyword>
<keyword id="KW-1090">Inhibition of host innate immune response by virus</keyword>
<keyword id="KW-0645">Protease</keyword>
<keyword id="KW-1185">Reference proteome</keyword>
<keyword id="KW-0688">Ribosomal frameshifting</keyword>
<keyword id="KW-0720">Serine protease</keyword>
<keyword id="KW-0941">Suppressor of RNA silencing</keyword>
<keyword id="KW-0813">Transport</keyword>
<keyword id="KW-0899">Viral immunoevasion</keyword>
<keyword id="KW-0916">Viral movement protein</keyword>
<name>MVP_PVYN</name>
<proteinExistence type="evidence at protein level"/>
<evidence type="ECO:0000250" key="1"/>
<evidence type="ECO:0000250" key="2">
    <source>
        <dbReference type="UniProtKB" id="P04517"/>
    </source>
</evidence>
<evidence type="ECO:0000250" key="3">
    <source>
        <dbReference type="UniProtKB" id="P0CK11"/>
    </source>
</evidence>
<evidence type="ECO:0000255" key="4">
    <source>
        <dbReference type="PROSITE-ProRule" id="PRU01080"/>
    </source>
</evidence>
<evidence type="ECO:0000255" key="5">
    <source>
        <dbReference type="PROSITE-ProRule" id="PRU01219"/>
    </source>
</evidence>
<evidence type="ECO:0000269" key="6">
    <source>
    </source>
</evidence>
<evidence type="ECO:0000305" key="7"/>
<accession>P0CJ93</accession>
<organismHost>
    <name type="scientific">Capsicum</name>
    <name type="common">peppers</name>
    <dbReference type="NCBI Taxonomy" id="4071"/>
</organismHost>
<organismHost>
    <name type="scientific">Nicotiana</name>
    <dbReference type="NCBI Taxonomy" id="4085"/>
</organismHost>
<organismHost>
    <name type="scientific">Solanum lycopersicum</name>
    <name type="common">Tomato</name>
    <name type="synonym">Lycopersicon esculentum</name>
    <dbReference type="NCBI Taxonomy" id="4081"/>
</organismHost>
<organismHost>
    <name type="scientific">Solanum tuberosum</name>
    <name type="common">Potato</name>
    <dbReference type="NCBI Taxonomy" id="4113"/>
</organismHost>
<comment type="function">
    <molecule>Helper component proteinase</molecule>
    <text evidence="2">Required for aphid transmission and also has proteolytic activity. Only cleaves a Gly-Gly dipeptide at its own C-terminus. Interacts with virions and aphid stylets. Acts as a suppressor of RNA-mediated gene silencing, also known as post-transcriptional gene silencing (PTGS), a mechanism of plant viral defense that limits the accumulation of viral RNAs. May have RNA-binding activity.</text>
</comment>
<comment type="function">
    <molecule>Movement protein P3N-PIPO</molecule>
    <text evidence="3">Allows efficient cell to cell propagation, by bypassing the host cell wall barrier. Transports viral genome to neighboring plant cells directly through plasmosdesmata, without any budding.</text>
</comment>
<comment type="catalytic activity">
    <molecule>Helper component proteinase</molecule>
    <reaction>
        <text>Hydrolyzes a Gly-|-Gly bond at its own C-terminus, commonly in the sequence -Tyr-Xaa-Val-Gly-|-Gly, in the processing of the potyviral polyprotein.</text>
        <dbReference type="EC" id="3.4.22.45"/>
    </reaction>
</comment>
<comment type="subunit">
    <molecule>Movement protein P3N-PIPO</molecule>
    <text evidence="3">Interacts (via PIPO domain) with host PCaP1 protein; this interaction may help to anchor the movement complex to the plasma membrane from which the complex could move to the plasmodesmata.</text>
</comment>
<comment type="subcellular location">
    <molecule>Movement protein P3N-PIPO</molecule>
    <subcellularLocation>
        <location evidence="3">Host cell junction</location>
        <location evidence="3">Host plasmodesma</location>
    </subcellularLocation>
</comment>
<comment type="alternative products">
    <event type="ribosomal frameshifting"/>
    <isoform>
        <id>P0CJ93-1</id>
        <name>P3N-PIPO polyprotein</name>
        <sequence type="displayed"/>
    </isoform>
    <isoform>
        <id>P18247-1</id>
        <name>Genome polyprotein</name>
        <sequence type="external"/>
    </isoform>
</comment>
<comment type="domain">
    <molecule>Helper component proteinase</molecule>
    <text evidence="1">The N-terminus of helper component proteinase is involved in interaction with stylets. The central part is involved in interaction with virions and the C-terminus is involved in cell-to cell movement of the virus (By similarity).</text>
</comment>
<comment type="PTM">
    <text evidence="6">Potyviral RNA is expressed as two polyproteins which undergo post-translational proteolytic processing. Genome polyprotein is processed by NIa-pro, P1 and HC-pro proteinases resulting in the production of at least ten individual proteins. P3N-PIPO is cleaved by P1 and HC-pro proteinases resulting in the production of three individual proteins. The P1 proteinase and the HC-pro cleave only their respective C-termini autocatalytically.</text>
</comment>
<comment type="miscellaneous">
    <molecule>Isoform P3N-PIPO polyprotein</molecule>
    <text>Produced by -1 ribosomal frameshifting in P3 ORF.</text>
</comment>
<comment type="similarity">
    <text evidence="7">Belongs to the potyviridae P3N-PIPO polyprotein family.</text>
</comment>
<feature type="chain" id="PRO_0000420042" description="P3N-PIPO polyprotein">
    <location>
        <begin position="1"/>
        <end position="986"/>
    </location>
</feature>
<feature type="chain" id="PRO_0000420043" description="P1 protease">
    <location>
        <begin position="1"/>
        <end position="284"/>
    </location>
</feature>
<feature type="chain" id="PRO_0000420044" description="Helper component proteinase">
    <location>
        <begin position="285"/>
        <end position="740"/>
    </location>
</feature>
<feature type="chain" id="PRO_0000408536" description="Movement protein P3N-PIPO">
    <location>
        <begin position="741"/>
        <end position="986"/>
    </location>
</feature>
<feature type="domain" description="Peptidase S30" evidence="5">
    <location>
        <begin position="141"/>
        <end position="284"/>
    </location>
</feature>
<feature type="domain" description="Peptidase C6" evidence="4">
    <location>
        <begin position="618"/>
        <end position="740"/>
    </location>
</feature>
<feature type="short sequence motif" description="Involved in interaction with stylet and aphid transmission" evidence="1">
    <location>
        <begin position="334"/>
        <end position="337"/>
    </location>
</feature>
<feature type="short sequence motif" description="Involved in virions binding and aphid transmission" evidence="1">
    <location>
        <begin position="592"/>
        <end position="594"/>
    </location>
</feature>
<feature type="active site" description="For P1 proteinase activity" evidence="5">
    <location>
        <position position="192"/>
    </location>
</feature>
<feature type="active site" description="For P1 proteinase activity" evidence="5">
    <location>
        <position position="201"/>
    </location>
</feature>
<feature type="active site" description="For P1 proteinase activity" evidence="5">
    <location>
        <position position="235"/>
    </location>
</feature>
<feature type="active site" description="For helper component proteinase activity" evidence="4">
    <location>
        <position position="626"/>
    </location>
</feature>
<feature type="active site" description="For helper component proteinase activity" evidence="4">
    <location>
        <position position="699"/>
    </location>
</feature>
<feature type="site" description="Cleavage; by P1 proteinase" evidence="5">
    <location>
        <begin position="284"/>
        <end position="285"/>
    </location>
</feature>
<feature type="site" description="Cleavage; by autolysis" evidence="4">
    <location>
        <begin position="740"/>
        <end position="741"/>
    </location>
</feature>
<feature type="unsure residue">
    <location>
        <begin position="910"/>
        <end position="916"/>
    </location>
</feature>